<feature type="chain" id="PRO_0000347799" description="Alanine--tRNA ligase">
    <location>
        <begin position="1"/>
        <end position="876"/>
    </location>
</feature>
<feature type="binding site" evidence="1">
    <location>
        <position position="564"/>
    </location>
    <ligand>
        <name>Zn(2+)</name>
        <dbReference type="ChEBI" id="CHEBI:29105"/>
    </ligand>
</feature>
<feature type="binding site" evidence="1">
    <location>
        <position position="568"/>
    </location>
    <ligand>
        <name>Zn(2+)</name>
        <dbReference type="ChEBI" id="CHEBI:29105"/>
    </ligand>
</feature>
<feature type="binding site" evidence="1">
    <location>
        <position position="666"/>
    </location>
    <ligand>
        <name>Zn(2+)</name>
        <dbReference type="ChEBI" id="CHEBI:29105"/>
    </ligand>
</feature>
<feature type="binding site" evidence="1">
    <location>
        <position position="670"/>
    </location>
    <ligand>
        <name>Zn(2+)</name>
        <dbReference type="ChEBI" id="CHEBI:29105"/>
    </ligand>
</feature>
<feature type="modified residue" description="N6-acetyllysine" evidence="1">
    <location>
        <position position="74"/>
    </location>
</feature>
<organism>
    <name type="scientific">Shigella flexneri serotype 5b (strain 8401)</name>
    <dbReference type="NCBI Taxonomy" id="373384"/>
    <lineage>
        <taxon>Bacteria</taxon>
        <taxon>Pseudomonadati</taxon>
        <taxon>Pseudomonadota</taxon>
        <taxon>Gammaproteobacteria</taxon>
        <taxon>Enterobacterales</taxon>
        <taxon>Enterobacteriaceae</taxon>
        <taxon>Shigella</taxon>
    </lineage>
</organism>
<comment type="function">
    <text evidence="1">Catalyzes the attachment of alanine to tRNA(Ala) in a two-step reaction: alanine is first activated by ATP to form Ala-AMP and then transferred to the acceptor end of tRNA(Ala). Also edits incorrectly charged Ser-tRNA(Ala) and Gly-tRNA(Ala) via its editing domain.</text>
</comment>
<comment type="catalytic activity">
    <reaction evidence="1">
        <text>tRNA(Ala) + L-alanine + ATP = L-alanyl-tRNA(Ala) + AMP + diphosphate</text>
        <dbReference type="Rhea" id="RHEA:12540"/>
        <dbReference type="Rhea" id="RHEA-COMP:9657"/>
        <dbReference type="Rhea" id="RHEA-COMP:9923"/>
        <dbReference type="ChEBI" id="CHEBI:30616"/>
        <dbReference type="ChEBI" id="CHEBI:33019"/>
        <dbReference type="ChEBI" id="CHEBI:57972"/>
        <dbReference type="ChEBI" id="CHEBI:78442"/>
        <dbReference type="ChEBI" id="CHEBI:78497"/>
        <dbReference type="ChEBI" id="CHEBI:456215"/>
        <dbReference type="EC" id="6.1.1.7"/>
    </reaction>
</comment>
<comment type="cofactor">
    <cofactor evidence="1">
        <name>Zn(2+)</name>
        <dbReference type="ChEBI" id="CHEBI:29105"/>
    </cofactor>
    <text evidence="1">Binds 1 zinc ion per subunit.</text>
</comment>
<comment type="subunit">
    <text evidence="1">Homotetramer.</text>
</comment>
<comment type="subcellular location">
    <subcellularLocation>
        <location evidence="1">Cytoplasm</location>
    </subcellularLocation>
</comment>
<comment type="domain">
    <text evidence="1">Consists of three domains; the N-terminal catalytic domain, the editing domain and the C-terminal C-Ala domain. The editing domain removes incorrectly charged amino acids, while the C-Ala domain, along with tRNA(Ala), serves as a bridge to cooperatively bring together the editing and aminoacylation centers thus stimulating deacylation of misacylated tRNAs.</text>
</comment>
<comment type="similarity">
    <text evidence="1">Belongs to the class-II aminoacyl-tRNA synthetase family.</text>
</comment>
<dbReference type="EC" id="6.1.1.7" evidence="1"/>
<dbReference type="EMBL" id="CP000266">
    <property type="protein sequence ID" value="ABF04892.1"/>
    <property type="molecule type" value="Genomic_DNA"/>
</dbReference>
<dbReference type="RefSeq" id="WP_000047164.1">
    <property type="nucleotide sequence ID" value="NC_008258.1"/>
</dbReference>
<dbReference type="SMR" id="Q0T1C3"/>
<dbReference type="KEGG" id="sfv:SFV_2808"/>
<dbReference type="HOGENOM" id="CLU_004485_1_1_6"/>
<dbReference type="Proteomes" id="UP000000659">
    <property type="component" value="Chromosome"/>
</dbReference>
<dbReference type="GO" id="GO:0005829">
    <property type="term" value="C:cytosol"/>
    <property type="evidence" value="ECO:0007669"/>
    <property type="project" value="TreeGrafter"/>
</dbReference>
<dbReference type="GO" id="GO:0004813">
    <property type="term" value="F:alanine-tRNA ligase activity"/>
    <property type="evidence" value="ECO:0007669"/>
    <property type="project" value="UniProtKB-UniRule"/>
</dbReference>
<dbReference type="GO" id="GO:0002161">
    <property type="term" value="F:aminoacyl-tRNA deacylase activity"/>
    <property type="evidence" value="ECO:0007669"/>
    <property type="project" value="TreeGrafter"/>
</dbReference>
<dbReference type="GO" id="GO:0005524">
    <property type="term" value="F:ATP binding"/>
    <property type="evidence" value="ECO:0007669"/>
    <property type="project" value="UniProtKB-UniRule"/>
</dbReference>
<dbReference type="GO" id="GO:0000049">
    <property type="term" value="F:tRNA binding"/>
    <property type="evidence" value="ECO:0007669"/>
    <property type="project" value="UniProtKB-KW"/>
</dbReference>
<dbReference type="GO" id="GO:0008270">
    <property type="term" value="F:zinc ion binding"/>
    <property type="evidence" value="ECO:0007669"/>
    <property type="project" value="UniProtKB-UniRule"/>
</dbReference>
<dbReference type="GO" id="GO:0006419">
    <property type="term" value="P:alanyl-tRNA aminoacylation"/>
    <property type="evidence" value="ECO:0007669"/>
    <property type="project" value="UniProtKB-UniRule"/>
</dbReference>
<dbReference type="GO" id="GO:0045892">
    <property type="term" value="P:negative regulation of DNA-templated transcription"/>
    <property type="evidence" value="ECO:0007669"/>
    <property type="project" value="TreeGrafter"/>
</dbReference>
<dbReference type="CDD" id="cd00673">
    <property type="entry name" value="AlaRS_core"/>
    <property type="match status" value="1"/>
</dbReference>
<dbReference type="FunFam" id="2.40.30.130:FF:000001">
    <property type="entry name" value="Alanine--tRNA ligase"/>
    <property type="match status" value="1"/>
</dbReference>
<dbReference type="FunFam" id="3.10.310.40:FF:000001">
    <property type="entry name" value="Alanine--tRNA ligase"/>
    <property type="match status" value="1"/>
</dbReference>
<dbReference type="FunFam" id="3.30.54.20:FF:000001">
    <property type="entry name" value="Alanine--tRNA ligase"/>
    <property type="match status" value="1"/>
</dbReference>
<dbReference type="FunFam" id="3.30.930.10:FF:000004">
    <property type="entry name" value="Alanine--tRNA ligase"/>
    <property type="match status" value="1"/>
</dbReference>
<dbReference type="FunFam" id="3.30.980.10:FF:000004">
    <property type="entry name" value="Alanine--tRNA ligase, cytoplasmic"/>
    <property type="match status" value="1"/>
</dbReference>
<dbReference type="Gene3D" id="2.40.30.130">
    <property type="match status" value="1"/>
</dbReference>
<dbReference type="Gene3D" id="3.10.310.40">
    <property type="match status" value="1"/>
</dbReference>
<dbReference type="Gene3D" id="3.30.54.20">
    <property type="match status" value="1"/>
</dbReference>
<dbReference type="Gene3D" id="6.10.250.550">
    <property type="match status" value="1"/>
</dbReference>
<dbReference type="Gene3D" id="3.30.930.10">
    <property type="entry name" value="Bira Bifunctional Protein, Domain 2"/>
    <property type="match status" value="1"/>
</dbReference>
<dbReference type="Gene3D" id="3.30.980.10">
    <property type="entry name" value="Threonyl-trna Synthetase, Chain A, domain 2"/>
    <property type="match status" value="1"/>
</dbReference>
<dbReference type="HAMAP" id="MF_00036_B">
    <property type="entry name" value="Ala_tRNA_synth_B"/>
    <property type="match status" value="1"/>
</dbReference>
<dbReference type="InterPro" id="IPR045864">
    <property type="entry name" value="aa-tRNA-synth_II/BPL/LPL"/>
</dbReference>
<dbReference type="InterPro" id="IPR002318">
    <property type="entry name" value="Ala-tRNA-lgiase_IIc"/>
</dbReference>
<dbReference type="InterPro" id="IPR018162">
    <property type="entry name" value="Ala-tRNA-ligase_IIc_anticod-bd"/>
</dbReference>
<dbReference type="InterPro" id="IPR018165">
    <property type="entry name" value="Ala-tRNA-synth_IIc_core"/>
</dbReference>
<dbReference type="InterPro" id="IPR018164">
    <property type="entry name" value="Ala-tRNA-synth_IIc_N"/>
</dbReference>
<dbReference type="InterPro" id="IPR050058">
    <property type="entry name" value="Ala-tRNA_ligase"/>
</dbReference>
<dbReference type="InterPro" id="IPR023033">
    <property type="entry name" value="Ala_tRNA_ligase_euk/bac"/>
</dbReference>
<dbReference type="InterPro" id="IPR003156">
    <property type="entry name" value="DHHA1_dom"/>
</dbReference>
<dbReference type="InterPro" id="IPR018163">
    <property type="entry name" value="Thr/Ala-tRNA-synth_IIc_edit"/>
</dbReference>
<dbReference type="InterPro" id="IPR009000">
    <property type="entry name" value="Transl_B-barrel_sf"/>
</dbReference>
<dbReference type="InterPro" id="IPR012947">
    <property type="entry name" value="tRNA_SAD"/>
</dbReference>
<dbReference type="NCBIfam" id="TIGR00344">
    <property type="entry name" value="alaS"/>
    <property type="match status" value="1"/>
</dbReference>
<dbReference type="PANTHER" id="PTHR11777:SF9">
    <property type="entry name" value="ALANINE--TRNA LIGASE, CYTOPLASMIC"/>
    <property type="match status" value="1"/>
</dbReference>
<dbReference type="PANTHER" id="PTHR11777">
    <property type="entry name" value="ALANYL-TRNA SYNTHETASE"/>
    <property type="match status" value="1"/>
</dbReference>
<dbReference type="Pfam" id="PF02272">
    <property type="entry name" value="DHHA1"/>
    <property type="match status" value="1"/>
</dbReference>
<dbReference type="Pfam" id="PF01411">
    <property type="entry name" value="tRNA-synt_2c"/>
    <property type="match status" value="1"/>
</dbReference>
<dbReference type="Pfam" id="PF07973">
    <property type="entry name" value="tRNA_SAD"/>
    <property type="match status" value="1"/>
</dbReference>
<dbReference type="PRINTS" id="PR00980">
    <property type="entry name" value="TRNASYNTHALA"/>
</dbReference>
<dbReference type="SMART" id="SM00863">
    <property type="entry name" value="tRNA_SAD"/>
    <property type="match status" value="1"/>
</dbReference>
<dbReference type="SUPFAM" id="SSF55681">
    <property type="entry name" value="Class II aaRS and biotin synthetases"/>
    <property type="match status" value="1"/>
</dbReference>
<dbReference type="SUPFAM" id="SSF101353">
    <property type="entry name" value="Putative anticodon-binding domain of alanyl-tRNA synthetase (AlaRS)"/>
    <property type="match status" value="1"/>
</dbReference>
<dbReference type="SUPFAM" id="SSF55186">
    <property type="entry name" value="ThrRS/AlaRS common domain"/>
    <property type="match status" value="1"/>
</dbReference>
<dbReference type="SUPFAM" id="SSF50447">
    <property type="entry name" value="Translation proteins"/>
    <property type="match status" value="1"/>
</dbReference>
<dbReference type="PROSITE" id="PS50860">
    <property type="entry name" value="AA_TRNA_LIGASE_II_ALA"/>
    <property type="match status" value="1"/>
</dbReference>
<gene>
    <name evidence="1" type="primary">alaS</name>
    <name type="ordered locus">SFV_2808</name>
</gene>
<accession>Q0T1C3</accession>
<sequence length="876" mass="96017">MSKSTAEIRQAFLDFFHSKGHQVVASSSLVPHNDPTLLFTNAGMNQFKDVFLGLDKRNYSRATTSQRCVRAGGKHNDLENVGYTARHHTFFEMLGNFSFGDYFKHDAIQFAWELLTSEKWFALPKERLWVTVYESDDEAYEIWEKEVGIPRERIIRIGDNKGAPYASDNFWQMGDTGPCGPCTEIFYDHGDHIWGGPPGSPEEDGDRYIEIWNIVFMQFNRQADGTMEPLPKPSVDTGMGLERIAAVLQHVNSNYDIDLFRTLIQAVAKVTGATDLSNKSLRVIADHIRSCAFLIADGVMPSNENRGYVLRRIIRRAVRHGNMLGAKETFFYKLVGPLIDVMGSAGEDLKRQQAQVEQVLKTEEEQFARTLERGLALLDEELAKLSGDTLDGETAFRLYDTYGFPVDLTADVCRERNIKVDEAGFEAAMEEQRRRAREASGFGADYNAMIRVDSASEFKGYDHLELNGKVTALFVDGKAVDAINAGQEAVVVLDQTPFYAESGGQVGDKGELKGANFSFAVEDTQKYGQAIGHIGKLAAGSLKVGDAVQADIDEARRARIRLNHSATHLMHAALRQVLGTHVSQKGSLVNDKVLRFDFSHNEAMKPEEIRAVEDLVNAQIRRNLPIETNIMNLEAAKAKGAMALFGEKYDERVRVLSMGDFSTELCGGTHASRTGDIGLFRIISESGTAAGVRRIEAVTGEGAITTVHADSDRLSEVAHLLKGDSNNLADKVRSVLERTRQLEKELQQLKEQAAAQESANLSSKAIDVNGVKLLVSELSGVEPKMLRTMVDDLKNQLGSTIIVLATVAEGKVSLIAGVSKDVTDRVKAGELIGMVAQQVGGKGGGRPDMAQAGGTDAAALPAALASVKGWVSAKLQ</sequence>
<proteinExistence type="inferred from homology"/>
<protein>
    <recommendedName>
        <fullName evidence="1">Alanine--tRNA ligase</fullName>
        <ecNumber evidence="1">6.1.1.7</ecNumber>
    </recommendedName>
    <alternativeName>
        <fullName evidence="1">Alanyl-tRNA synthetase</fullName>
        <shortName evidence="1">AlaRS</shortName>
    </alternativeName>
</protein>
<keyword id="KW-0007">Acetylation</keyword>
<keyword id="KW-0030">Aminoacyl-tRNA synthetase</keyword>
<keyword id="KW-0067">ATP-binding</keyword>
<keyword id="KW-0963">Cytoplasm</keyword>
<keyword id="KW-0436">Ligase</keyword>
<keyword id="KW-0479">Metal-binding</keyword>
<keyword id="KW-0547">Nucleotide-binding</keyword>
<keyword id="KW-0648">Protein biosynthesis</keyword>
<keyword id="KW-0694">RNA-binding</keyword>
<keyword id="KW-0820">tRNA-binding</keyword>
<keyword id="KW-0862">Zinc</keyword>
<reference key="1">
    <citation type="journal article" date="2006" name="BMC Genomics">
        <title>Complete genome sequence of Shigella flexneri 5b and comparison with Shigella flexneri 2a.</title>
        <authorList>
            <person name="Nie H."/>
            <person name="Yang F."/>
            <person name="Zhang X."/>
            <person name="Yang J."/>
            <person name="Chen L."/>
            <person name="Wang J."/>
            <person name="Xiong Z."/>
            <person name="Peng J."/>
            <person name="Sun L."/>
            <person name="Dong J."/>
            <person name="Xue Y."/>
            <person name="Xu X."/>
            <person name="Chen S."/>
            <person name="Yao Z."/>
            <person name="Shen Y."/>
            <person name="Jin Q."/>
        </authorList>
    </citation>
    <scope>NUCLEOTIDE SEQUENCE [LARGE SCALE GENOMIC DNA]</scope>
    <source>
        <strain>8401</strain>
    </source>
</reference>
<name>SYA_SHIF8</name>
<evidence type="ECO:0000255" key="1">
    <source>
        <dbReference type="HAMAP-Rule" id="MF_00036"/>
    </source>
</evidence>